<gene>
    <name evidence="11" type="primary">ccaA</name>
    <name evidence="10" type="synonym">icfA</name>
    <name type="ordered locus">Synpcc7942_1447</name>
</gene>
<accession>P27134</accession>
<accession>Q31N92</accession>
<keyword id="KW-0002">3D-structure</keyword>
<keyword id="KW-1283">Bacterial microcompartment</keyword>
<keyword id="KW-0120">Carbon dioxide fixation</keyword>
<keyword id="KW-1282">Carboxysome</keyword>
<keyword id="KW-0456">Lyase</keyword>
<keyword id="KW-0479">Metal-binding</keyword>
<keyword id="KW-0602">Photosynthesis</keyword>
<keyword id="KW-1185">Reference proteome</keyword>
<keyword id="KW-0862">Zinc</keyword>
<name>CYNT_SYNE7</name>
<comment type="function">
    <text evidence="6 13">Reversible hydration of carbon dioxide. Essential to photosynthetic carbon dioxide fixation, supplies CO(2) to RuBisCO (ribulose bisphosphate carboxylase, rbcL-rbcS) in the carboxysome (Probable). Loss of activity results in limitation of CO(2) availability to RuBisCO located in the cytoplasm (PubMed:24585024).</text>
</comment>
<comment type="catalytic activity">
    <reaction evidence="1">
        <text>hydrogencarbonate + H(+) = CO2 + H2O</text>
        <dbReference type="Rhea" id="RHEA:10748"/>
        <dbReference type="ChEBI" id="CHEBI:15377"/>
        <dbReference type="ChEBI" id="CHEBI:15378"/>
        <dbReference type="ChEBI" id="CHEBI:16526"/>
        <dbReference type="ChEBI" id="CHEBI:17544"/>
        <dbReference type="EC" id="4.2.1.1"/>
    </reaction>
</comment>
<comment type="cofactor">
    <cofactor evidence="1">
        <name>Zn(2+)</name>
        <dbReference type="ChEBI" id="CHEBI:29105"/>
    </cofactor>
    <text evidence="1">Binds 1 zinc ion per monomer.</text>
</comment>
<comment type="subunit">
    <text evidence="1 3">A hexamer formed by a trimer of dimers (By similarity). Purified from carboxysomes with the both RuBisCO subunits and the full-length form of CcmM, probably interacts with the N-terminus of CcmM (PubMed:17675289).</text>
</comment>
<comment type="subcellular location">
    <subcellularLocation>
        <location evidence="3 4 5 7 9">Carboxysome</location>
    </subcellularLocation>
    <text evidence="1 5">This cyanobacterium makes beta-type carboxysomes (PubMed:22928045). Associates with the shell portion of carboxysomes (By similarity).</text>
</comment>
<comment type="induction">
    <text evidence="9">Carboxysome size and components vary with growth conditions. When grown in ambient air at medium light (50 uE meter(-2) second(-1)) there are 14 units of this protein per carboxysome, the numbers decrease slightly under low light, and increase under high light and high CO(2) (at protein level).</text>
</comment>
<comment type="disruption phenotype">
    <text evidence="2 6">Essential for photosynthetic CO(2) fixation, cells do not grow in normal air, but will grow in 5% CO(2), called a high-CO(2) requiring phenotype, HCR (PubMed:1584776). Cells do not grow in 2% CO(2), and grow more slowly than wild-type at 5% CO(2). 70% reduction in the efficiency of RuBisCO carboxylation activity from isolated carboxysomes; there is probably considerable oxygenation of the substrate (PubMed:24585024).</text>
</comment>
<comment type="biotechnology">
    <text evidence="8">Heterologous expression of 12 carboxysomal genes in E.coli (ccaA, ccmK2, ccmK3, ccmK4, ccmL, ccmM, ccmN, ccmO, ccmP, rbcL, rbcS, rbcX) leads to the formation of bodies that resemble carboxysomes, have densely packed paracrystalline arrays and RuBisCO activity. These structures open the door to generating carboxysomes in plant cells to increase their photosynthesis and productivity, as well as tailoring bacterial microcompartments to specific metabolic needs and molecule delivery. The absence of ccaA, ccmK3, ccmK4, ccmP and rbcX leads to less active RuBisCO.</text>
</comment>
<comment type="similarity">
    <text evidence="12">Belongs to the beta-class carbonic anhydrase family.</text>
</comment>
<evidence type="ECO:0000250" key="1">
    <source>
        <dbReference type="UniProtKB" id="Q54735"/>
    </source>
</evidence>
<evidence type="ECO:0000269" key="2">
    <source>
    </source>
</evidence>
<evidence type="ECO:0000269" key="3">
    <source>
    </source>
</evidence>
<evidence type="ECO:0000269" key="4">
    <source>
    </source>
</evidence>
<evidence type="ECO:0000269" key="5">
    <source>
    </source>
</evidence>
<evidence type="ECO:0000269" key="6">
    <source>
    </source>
</evidence>
<evidence type="ECO:0000269" key="7">
    <source>
    </source>
</evidence>
<evidence type="ECO:0000269" key="8">
    <source>
    </source>
</evidence>
<evidence type="ECO:0000269" key="9">
    <source>
    </source>
</evidence>
<evidence type="ECO:0000303" key="10">
    <source>
    </source>
</evidence>
<evidence type="ECO:0000303" key="11">
    <source>
    </source>
</evidence>
<evidence type="ECO:0000305" key="12"/>
<evidence type="ECO:0000305" key="13">
    <source>
    </source>
</evidence>
<evidence type="ECO:0007829" key="14">
    <source>
        <dbReference type="PDB" id="7O54"/>
    </source>
</evidence>
<feature type="chain" id="PRO_0000077463" description="Carbonic anhydrase">
    <location>
        <begin position="1"/>
        <end position="272"/>
    </location>
</feature>
<feature type="binding site" evidence="1">
    <location>
        <position position="39"/>
    </location>
    <ligand>
        <name>Zn(2+)</name>
        <dbReference type="ChEBI" id="CHEBI:29105"/>
    </ligand>
</feature>
<feature type="binding site" evidence="1">
    <location>
        <position position="98"/>
    </location>
    <ligand>
        <name>Zn(2+)</name>
        <dbReference type="ChEBI" id="CHEBI:29105"/>
    </ligand>
</feature>
<feature type="binding site" evidence="1">
    <location>
        <position position="101"/>
    </location>
    <ligand>
        <name>Zn(2+)</name>
        <dbReference type="ChEBI" id="CHEBI:29105"/>
    </ligand>
</feature>
<feature type="helix" evidence="14">
    <location>
        <begin position="260"/>
        <end position="267"/>
    </location>
</feature>
<reference key="1">
    <citation type="journal article" date="1992" name="Proc. Natl. Acad. Sci. U.S.A.">
        <title>A gene homologous to chloroplast carbonic anhydrase (icfA) is essential to photosynthetic carbon dioxide fixation by Synechococcus PCC7942.</title>
        <authorList>
            <person name="Fukuzawa H."/>
            <person name="Suzuki E."/>
            <person name="Komukai Y."/>
            <person name="Miyachi S."/>
        </authorList>
    </citation>
    <scope>NUCLEOTIDE SEQUENCE [GENOMIC DNA]</scope>
    <scope>FUNCTION</scope>
    <scope>DISRUPTION PHENOTYPE</scope>
</reference>
<reference key="2">
    <citation type="submission" date="2005-08" db="EMBL/GenBank/DDBJ databases">
        <title>Complete sequence of chromosome 1 of Synechococcus elongatus PCC 7942.</title>
        <authorList>
            <consortium name="US DOE Joint Genome Institute"/>
            <person name="Copeland A."/>
            <person name="Lucas S."/>
            <person name="Lapidus A."/>
            <person name="Barry K."/>
            <person name="Detter J.C."/>
            <person name="Glavina T."/>
            <person name="Hammon N."/>
            <person name="Israni S."/>
            <person name="Pitluck S."/>
            <person name="Schmutz J."/>
            <person name="Larimer F."/>
            <person name="Land M."/>
            <person name="Kyrpides N."/>
            <person name="Lykidis A."/>
            <person name="Golden S."/>
            <person name="Richardson P."/>
        </authorList>
    </citation>
    <scope>NUCLEOTIDE SEQUENCE [LARGE SCALE GENOMIC DNA]</scope>
    <source>
        <strain>ATCC 33912 / PCC 7942 / FACHB-805</strain>
    </source>
</reference>
<reference key="3">
    <citation type="journal article" date="2007" name="J. Biol. Chem.">
        <title>Analysis of carboxysomes from Synechococcus PCC7942 reveals multiple Rubisco complexes with carboxysomal proteins CcmM and CcaA.</title>
        <authorList>
            <person name="Long B.M."/>
            <person name="Badger M.R."/>
            <person name="Whitney S.M."/>
            <person name="Price G.D."/>
        </authorList>
    </citation>
    <scope>INTERACTION WITH CCMM</scope>
    <scope>SUBUNIT</scope>
    <scope>SUBCELLULAR LOCATION</scope>
    <source>
        <strain>ATCC 33912 / PCC 7942 / FACHB-805</strain>
    </source>
</reference>
<reference key="4">
    <citation type="journal article" date="2010" name="Plant Physiol.">
        <title>Functional cyanobacterial beta-carboxysomes have an absolute requirement for both long and short forms of the CcmM protein.</title>
        <authorList>
            <person name="Long B.M."/>
            <person name="Tucker L."/>
            <person name="Badger M.R."/>
            <person name="Price G.D."/>
        </authorList>
    </citation>
    <scope>SUBCELLULAR LOCATION</scope>
    <source>
        <strain>ATCC 33912 / PCC 7942 / FACHB-805</strain>
    </source>
</reference>
<reference key="5">
    <citation type="journal article" date="2012" name="PLoS ONE">
        <title>Structural determinants of the outer shell of beta-carboxysomes in Synechococcus elongatus PCC 7942: roles for CcmK2, K3-K4, CcmO, and CcmL.</title>
        <authorList>
            <person name="Rae B.D."/>
            <person name="Long B.M."/>
            <person name="Badger M.R."/>
            <person name="Price G.D."/>
        </authorList>
    </citation>
    <scope>SUBCELLULAR LOCATION</scope>
    <source>
        <strain>ATCC 33912 / PCC 7942 / FACHB-805</strain>
    </source>
</reference>
<reference key="6">
    <citation type="journal article" date="2014" name="Photosyn. Res.">
        <title>In vitro and in vivo analyses of the role of the carboxysomal beta-type carbonic anhydrase of the cyanobacterium Synechococcus elongatus in carboxylation of ribulose-1,5-bisphosphate.</title>
        <authorList>
            <person name="Nishimura T."/>
            <person name="Yamaguchi O."/>
            <person name="Takatani N."/>
            <person name="Maeda S."/>
            <person name="Omata T."/>
        </authorList>
    </citation>
    <scope>FUNCTION</scope>
    <scope>DISRUPTION PHENOTYPE</scope>
    <source>
        <strain>ATCC 33912 / PCC 7942 / FACHB-805</strain>
    </source>
</reference>
<reference key="7">
    <citation type="journal article" date="2017" name="Nanoscale">
        <title>Direct characterization of the native structure and mechanics of cyanobacterial carboxysomes.</title>
        <authorList>
            <person name="Faulkner M."/>
            <person name="Rodriguez-Ramos J."/>
            <person name="Dykes G.F."/>
            <person name="Owen S.V."/>
            <person name="Casella S."/>
            <person name="Simpson D.M."/>
            <person name="Beynon R.J."/>
            <person name="Liu L.N."/>
        </authorList>
    </citation>
    <scope>SUBCELLULAR LOCATION</scope>
    <source>
        <strain>ATCC 33912 / PCC 7942 / FACHB-805</strain>
    </source>
</reference>
<reference key="8">
    <citation type="journal article" date="2018" name="Front. Plant Sci.">
        <title>Engineering and Modulating Functional Cyanobacterial CO2-Fixing Organelles.</title>
        <authorList>
            <person name="Fang Y."/>
            <person name="Huang F."/>
            <person name="Faulkner M."/>
            <person name="Jiang Q."/>
            <person name="Dykes G.F."/>
            <person name="Yang M."/>
            <person name="Liu L.N."/>
        </authorList>
    </citation>
    <scope>BIOTECHNOLOGY</scope>
    <source>
        <strain>ATCC 33912 / PCC 7942 / FACHB-805</strain>
    </source>
</reference>
<reference key="9">
    <citation type="journal article" date="2019" name="Plant Cell">
        <title>Single-Organelle Quantification Reveals Stoichiometric and Structural Variability of Carboxysomes Dependent on the Environment.</title>
        <authorList>
            <person name="Sun Y."/>
            <person name="Wollman A.J.M."/>
            <person name="Huang F."/>
            <person name="Leake M.C."/>
            <person name="Liu L.N."/>
        </authorList>
    </citation>
    <scope>SUBCELLULAR LOCATION</scope>
    <scope>INDUCTION</scope>
    <source>
        <strain>ATCC 33912 / PCC 7942 / FACHB-805</strain>
    </source>
</reference>
<organism>
    <name type="scientific">Synechococcus elongatus (strain ATCC 33912 / PCC 7942 / FACHB-805)</name>
    <name type="common">Anacystis nidulans R2</name>
    <dbReference type="NCBI Taxonomy" id="1140"/>
    <lineage>
        <taxon>Bacteria</taxon>
        <taxon>Bacillati</taxon>
        <taxon>Cyanobacteriota</taxon>
        <taxon>Cyanophyceae</taxon>
        <taxon>Synechococcales</taxon>
        <taxon>Synechococcaceae</taxon>
        <taxon>Synechococcus</taxon>
    </lineage>
</organism>
<proteinExistence type="evidence at protein level"/>
<sequence length="272" mass="30185">MRKLIEGLRHFRTSYYPSHRDLFEQFAKGQHPRVLFITCSDSRIDPNLITQSGMGELFVIRNAGNLIPPFGAANGGEGASIEYAIAALNIEHVVVCGHSHCGAMKGLLKLNQLQEDMPLVYDWLQHAQATRRLVLDNYSGYETDDLVEILVAENVLTQIENLKTYPIVRSRLFQGKLQIFGWIYEVESGEVLQISRTSSDDTGIDECPVRLPGSQEKAILGRCVVPLTEEVAVAPPEPEPVIAAVAAPPANYSSRGWLAPEQQQRIYRGNAS</sequence>
<dbReference type="EC" id="4.2.1.1" evidence="1"/>
<dbReference type="EMBL" id="M77095">
    <property type="protein sequence ID" value="AAA27315.1"/>
    <property type="molecule type" value="Genomic_DNA"/>
</dbReference>
<dbReference type="EMBL" id="CP000100">
    <property type="protein sequence ID" value="ABB57477.1"/>
    <property type="molecule type" value="Genomic_DNA"/>
</dbReference>
<dbReference type="PIR" id="S28795">
    <property type="entry name" value="S28795"/>
</dbReference>
<dbReference type="RefSeq" id="WP_011378036.1">
    <property type="nucleotide sequence ID" value="NZ_JACJTX010000004.1"/>
</dbReference>
<dbReference type="PDB" id="7O54">
    <property type="method" value="X-ray"/>
    <property type="resolution" value="1.63 A"/>
    <property type="chains" value="B=256-272"/>
</dbReference>
<dbReference type="PDBsum" id="7O54"/>
<dbReference type="SMR" id="P27134"/>
<dbReference type="STRING" id="1140.Synpcc7942_1447"/>
<dbReference type="PaxDb" id="1140-Synpcc7942_1447"/>
<dbReference type="KEGG" id="syf:Synpcc7942_1447"/>
<dbReference type="eggNOG" id="COG0288">
    <property type="taxonomic scope" value="Bacteria"/>
</dbReference>
<dbReference type="HOGENOM" id="CLU_053879_5_3_3"/>
<dbReference type="OrthoDB" id="9797527at2"/>
<dbReference type="BioCyc" id="SYNEL:SYNPCC7942_1447-MONOMER"/>
<dbReference type="Proteomes" id="UP000889800">
    <property type="component" value="Chromosome"/>
</dbReference>
<dbReference type="GO" id="GO:0031470">
    <property type="term" value="C:carboxysome"/>
    <property type="evidence" value="ECO:0000314"/>
    <property type="project" value="UniProtKB"/>
</dbReference>
<dbReference type="GO" id="GO:0004089">
    <property type="term" value="F:carbonate dehydratase activity"/>
    <property type="evidence" value="ECO:0000315"/>
    <property type="project" value="UniProtKB"/>
</dbReference>
<dbReference type="GO" id="GO:0008270">
    <property type="term" value="F:zinc ion binding"/>
    <property type="evidence" value="ECO:0007669"/>
    <property type="project" value="InterPro"/>
</dbReference>
<dbReference type="GO" id="GO:0015977">
    <property type="term" value="P:carbon fixation"/>
    <property type="evidence" value="ECO:0007669"/>
    <property type="project" value="UniProtKB-KW"/>
</dbReference>
<dbReference type="GO" id="GO:0015976">
    <property type="term" value="P:carbon utilization"/>
    <property type="evidence" value="ECO:0007669"/>
    <property type="project" value="InterPro"/>
</dbReference>
<dbReference type="GO" id="GO:0015979">
    <property type="term" value="P:photosynthesis"/>
    <property type="evidence" value="ECO:0007669"/>
    <property type="project" value="UniProtKB-KW"/>
</dbReference>
<dbReference type="CDD" id="cd00884">
    <property type="entry name" value="beta_CA_cladeB"/>
    <property type="match status" value="1"/>
</dbReference>
<dbReference type="FunFam" id="3.40.1050.10:FF:000003">
    <property type="entry name" value="Carbonic anhydrase"/>
    <property type="match status" value="1"/>
</dbReference>
<dbReference type="Gene3D" id="3.40.1050.10">
    <property type="entry name" value="Carbonic anhydrase"/>
    <property type="match status" value="1"/>
</dbReference>
<dbReference type="InterPro" id="IPR045066">
    <property type="entry name" value="Beta_CA_cladeB"/>
</dbReference>
<dbReference type="InterPro" id="IPR001765">
    <property type="entry name" value="Carbonic_anhydrase"/>
</dbReference>
<dbReference type="InterPro" id="IPR015892">
    <property type="entry name" value="Carbonic_anhydrase_CS"/>
</dbReference>
<dbReference type="InterPro" id="IPR036874">
    <property type="entry name" value="Carbonic_anhydrase_sf"/>
</dbReference>
<dbReference type="PANTHER" id="PTHR11002">
    <property type="entry name" value="CARBONIC ANHYDRASE"/>
    <property type="match status" value="1"/>
</dbReference>
<dbReference type="PANTHER" id="PTHR11002:SF76">
    <property type="entry name" value="CARBONIC ANHYDRASE"/>
    <property type="match status" value="1"/>
</dbReference>
<dbReference type="Pfam" id="PF00484">
    <property type="entry name" value="Pro_CA"/>
    <property type="match status" value="1"/>
</dbReference>
<dbReference type="SMART" id="SM00947">
    <property type="entry name" value="Pro_CA"/>
    <property type="match status" value="1"/>
</dbReference>
<dbReference type="SUPFAM" id="SSF53056">
    <property type="entry name" value="beta-carbonic anhydrase, cab"/>
    <property type="match status" value="1"/>
</dbReference>
<dbReference type="PROSITE" id="PS00704">
    <property type="entry name" value="PROK_CO2_ANHYDRASE_1"/>
    <property type="match status" value="1"/>
</dbReference>
<dbReference type="PROSITE" id="PS00705">
    <property type="entry name" value="PROK_CO2_ANHYDRASE_2"/>
    <property type="match status" value="1"/>
</dbReference>
<protein>
    <recommendedName>
        <fullName evidence="10">Carbonic anhydrase</fullName>
        <ecNumber evidence="1">4.2.1.1</ecNumber>
    </recommendedName>
    <alternativeName>
        <fullName>Carbonate dehydratase</fullName>
    </alternativeName>
</protein>